<protein>
    <recommendedName>
        <fullName evidence="1">Urease subunit gamma</fullName>
        <ecNumber evidence="1">3.5.1.5</ecNumber>
    </recommendedName>
    <alternativeName>
        <fullName evidence="1">Urea amidohydrolase subunit gamma</fullName>
    </alternativeName>
</protein>
<organism>
    <name type="scientific">Streptococcus thermophilus (strain ATCC BAA-250 / LMG 18311)</name>
    <dbReference type="NCBI Taxonomy" id="264199"/>
    <lineage>
        <taxon>Bacteria</taxon>
        <taxon>Bacillati</taxon>
        <taxon>Bacillota</taxon>
        <taxon>Bacilli</taxon>
        <taxon>Lactobacillales</taxon>
        <taxon>Streptococcaceae</taxon>
        <taxon>Streptococcus</taxon>
    </lineage>
</organism>
<name>URE3_STRT2</name>
<gene>
    <name evidence="1" type="primary">ureA</name>
    <name type="ordered locus">stu0281</name>
</gene>
<reference key="1">
    <citation type="journal article" date="2004" name="Nat. Biotechnol.">
        <title>Complete sequence and comparative genome analysis of the dairy bacterium Streptococcus thermophilus.</title>
        <authorList>
            <person name="Bolotin A."/>
            <person name="Quinquis B."/>
            <person name="Renault P."/>
            <person name="Sorokin A."/>
            <person name="Ehrlich S.D."/>
            <person name="Kulakauskas S."/>
            <person name="Lapidus A."/>
            <person name="Goltsman E."/>
            <person name="Mazur M."/>
            <person name="Pusch G.D."/>
            <person name="Fonstein M."/>
            <person name="Overbeek R."/>
            <person name="Kyprides N."/>
            <person name="Purnelle B."/>
            <person name="Prozzi D."/>
            <person name="Ngui K."/>
            <person name="Masuy D."/>
            <person name="Hancy F."/>
            <person name="Burteau S."/>
            <person name="Boutry M."/>
            <person name="Delcour J."/>
            <person name="Goffeau A."/>
            <person name="Hols P."/>
        </authorList>
    </citation>
    <scope>NUCLEOTIDE SEQUENCE [LARGE SCALE GENOMIC DNA]</scope>
    <source>
        <strain>ATCC BAA-250 / LMG 18311</strain>
    </source>
</reference>
<accession>Q5M609</accession>
<sequence length="100" mass="11299">MQLTMREQEKMMISLAAMIAQRRKDKGIKLNHPEAVALITDYVLEGAREGKTVAQLMDEARNLLTREDVMEGIAEMIPMIQVEATFTDSTKLVTVHDPIQ</sequence>
<comment type="catalytic activity">
    <reaction evidence="1">
        <text>urea + 2 H2O + H(+) = hydrogencarbonate + 2 NH4(+)</text>
        <dbReference type="Rhea" id="RHEA:20557"/>
        <dbReference type="ChEBI" id="CHEBI:15377"/>
        <dbReference type="ChEBI" id="CHEBI:15378"/>
        <dbReference type="ChEBI" id="CHEBI:16199"/>
        <dbReference type="ChEBI" id="CHEBI:17544"/>
        <dbReference type="ChEBI" id="CHEBI:28938"/>
        <dbReference type="EC" id="3.5.1.5"/>
    </reaction>
</comment>
<comment type="pathway">
    <text evidence="1">Nitrogen metabolism; urea degradation; CO(2) and NH(3) from urea (urease route): step 1/1.</text>
</comment>
<comment type="subunit">
    <text evidence="1">Heterotrimer of UreA (gamma), UreB (beta) and UreC (alpha) subunits. Three heterotrimers associate to form the active enzyme.</text>
</comment>
<comment type="subcellular location">
    <subcellularLocation>
        <location evidence="1">Cytoplasm</location>
    </subcellularLocation>
</comment>
<comment type="similarity">
    <text evidence="1">Belongs to the urease gamma subunit family.</text>
</comment>
<dbReference type="EC" id="3.5.1.5" evidence="1"/>
<dbReference type="EMBL" id="CP000023">
    <property type="protein sequence ID" value="AAV60003.1"/>
    <property type="molecule type" value="Genomic_DNA"/>
</dbReference>
<dbReference type="RefSeq" id="WP_002886558.1">
    <property type="nucleotide sequence ID" value="NC_006448.1"/>
</dbReference>
<dbReference type="SMR" id="Q5M609"/>
<dbReference type="STRING" id="264199.stu0281"/>
<dbReference type="KEGG" id="stl:stu0281"/>
<dbReference type="eggNOG" id="COG0831">
    <property type="taxonomic scope" value="Bacteria"/>
</dbReference>
<dbReference type="HOGENOM" id="CLU_145825_1_0_9"/>
<dbReference type="UniPathway" id="UPA00258">
    <property type="reaction ID" value="UER00370"/>
</dbReference>
<dbReference type="Proteomes" id="UP000001170">
    <property type="component" value="Chromosome"/>
</dbReference>
<dbReference type="GO" id="GO:0005737">
    <property type="term" value="C:cytoplasm"/>
    <property type="evidence" value="ECO:0007669"/>
    <property type="project" value="UniProtKB-SubCell"/>
</dbReference>
<dbReference type="GO" id="GO:0016151">
    <property type="term" value="F:nickel cation binding"/>
    <property type="evidence" value="ECO:0007669"/>
    <property type="project" value="InterPro"/>
</dbReference>
<dbReference type="GO" id="GO:0009039">
    <property type="term" value="F:urease activity"/>
    <property type="evidence" value="ECO:0007669"/>
    <property type="project" value="UniProtKB-UniRule"/>
</dbReference>
<dbReference type="GO" id="GO:0043419">
    <property type="term" value="P:urea catabolic process"/>
    <property type="evidence" value="ECO:0007669"/>
    <property type="project" value="UniProtKB-UniRule"/>
</dbReference>
<dbReference type="CDD" id="cd00390">
    <property type="entry name" value="Urease_gamma"/>
    <property type="match status" value="1"/>
</dbReference>
<dbReference type="Gene3D" id="3.30.280.10">
    <property type="entry name" value="Urease, gamma-like subunit"/>
    <property type="match status" value="1"/>
</dbReference>
<dbReference type="HAMAP" id="MF_00739">
    <property type="entry name" value="Urease_gamma"/>
    <property type="match status" value="1"/>
</dbReference>
<dbReference type="InterPro" id="IPR012010">
    <property type="entry name" value="Urease_gamma"/>
</dbReference>
<dbReference type="InterPro" id="IPR002026">
    <property type="entry name" value="Urease_gamma/gamma-beta_su"/>
</dbReference>
<dbReference type="InterPro" id="IPR036463">
    <property type="entry name" value="Urease_gamma_sf"/>
</dbReference>
<dbReference type="InterPro" id="IPR050069">
    <property type="entry name" value="Urease_subunit"/>
</dbReference>
<dbReference type="NCBIfam" id="NF009712">
    <property type="entry name" value="PRK13241.1"/>
    <property type="match status" value="1"/>
</dbReference>
<dbReference type="NCBIfam" id="TIGR00193">
    <property type="entry name" value="urease_gam"/>
    <property type="match status" value="1"/>
</dbReference>
<dbReference type="PANTHER" id="PTHR33569">
    <property type="entry name" value="UREASE"/>
    <property type="match status" value="1"/>
</dbReference>
<dbReference type="PANTHER" id="PTHR33569:SF1">
    <property type="entry name" value="UREASE"/>
    <property type="match status" value="1"/>
</dbReference>
<dbReference type="Pfam" id="PF00547">
    <property type="entry name" value="Urease_gamma"/>
    <property type="match status" value="1"/>
</dbReference>
<dbReference type="PIRSF" id="PIRSF001223">
    <property type="entry name" value="Urease_gamma"/>
    <property type="match status" value="1"/>
</dbReference>
<dbReference type="SUPFAM" id="SSF54111">
    <property type="entry name" value="Urease, gamma-subunit"/>
    <property type="match status" value="1"/>
</dbReference>
<evidence type="ECO:0000255" key="1">
    <source>
        <dbReference type="HAMAP-Rule" id="MF_00739"/>
    </source>
</evidence>
<proteinExistence type="inferred from homology"/>
<feature type="chain" id="PRO_0000234217" description="Urease subunit gamma">
    <location>
        <begin position="1"/>
        <end position="100"/>
    </location>
</feature>
<keyword id="KW-0963">Cytoplasm</keyword>
<keyword id="KW-0378">Hydrolase</keyword>
<keyword id="KW-1185">Reference proteome</keyword>